<feature type="chain" id="PRO_0000456614" description="Glia maturation factor">
    <location>
        <begin position="1"/>
        <end position="138"/>
    </location>
</feature>
<feature type="domain" description="ADF-H" evidence="2">
    <location>
        <begin position="3"/>
        <end position="138"/>
    </location>
</feature>
<keyword id="KW-0009">Actin-binding</keyword>
<keyword id="KW-0966">Cell projection</keyword>
<keyword id="KW-0963">Cytoplasm</keyword>
<keyword id="KW-0539">Nucleus</keyword>
<keyword id="KW-1185">Reference proteome</keyword>
<sequence>MSDNQICDISNEVLEELKKFRFSKSKNNAALILKVDREKQTVVLDEFIDDISVDELQDTLPGHQPRYVIYTYKMVHDDQRISYPMCFIFYTPRDSQIELQMMYACTKSALQREVDLTRVYEIRELDELTEEWLKAKLK</sequence>
<reference evidence="10" key="1">
    <citation type="journal article" date="2000" name="Science">
        <title>The genome sequence of Drosophila melanogaster.</title>
        <authorList>
            <person name="Adams M.D."/>
            <person name="Celniker S.E."/>
            <person name="Holt R.A."/>
            <person name="Evans C.A."/>
            <person name="Gocayne J.D."/>
            <person name="Amanatides P.G."/>
            <person name="Scherer S.E."/>
            <person name="Li P.W."/>
            <person name="Hoskins R.A."/>
            <person name="Galle R.F."/>
            <person name="George R.A."/>
            <person name="Lewis S.E."/>
            <person name="Richards S."/>
            <person name="Ashburner M."/>
            <person name="Henderson S.N."/>
            <person name="Sutton G.G."/>
            <person name="Wortman J.R."/>
            <person name="Yandell M.D."/>
            <person name="Zhang Q."/>
            <person name="Chen L.X."/>
            <person name="Brandon R.C."/>
            <person name="Rogers Y.-H.C."/>
            <person name="Blazej R.G."/>
            <person name="Champe M."/>
            <person name="Pfeiffer B.D."/>
            <person name="Wan K.H."/>
            <person name="Doyle C."/>
            <person name="Baxter E.G."/>
            <person name="Helt G."/>
            <person name="Nelson C.R."/>
            <person name="Miklos G.L.G."/>
            <person name="Abril J.F."/>
            <person name="Agbayani A."/>
            <person name="An H.-J."/>
            <person name="Andrews-Pfannkoch C."/>
            <person name="Baldwin D."/>
            <person name="Ballew R.M."/>
            <person name="Basu A."/>
            <person name="Baxendale J."/>
            <person name="Bayraktaroglu L."/>
            <person name="Beasley E.M."/>
            <person name="Beeson K.Y."/>
            <person name="Benos P.V."/>
            <person name="Berman B.P."/>
            <person name="Bhandari D."/>
            <person name="Bolshakov S."/>
            <person name="Borkova D."/>
            <person name="Botchan M.R."/>
            <person name="Bouck J."/>
            <person name="Brokstein P."/>
            <person name="Brottier P."/>
            <person name="Burtis K.C."/>
            <person name="Busam D.A."/>
            <person name="Butler H."/>
            <person name="Cadieu E."/>
            <person name="Center A."/>
            <person name="Chandra I."/>
            <person name="Cherry J.M."/>
            <person name="Cawley S."/>
            <person name="Dahlke C."/>
            <person name="Davenport L.B."/>
            <person name="Davies P."/>
            <person name="de Pablos B."/>
            <person name="Delcher A."/>
            <person name="Deng Z."/>
            <person name="Mays A.D."/>
            <person name="Dew I."/>
            <person name="Dietz S.M."/>
            <person name="Dodson K."/>
            <person name="Doup L.E."/>
            <person name="Downes M."/>
            <person name="Dugan-Rocha S."/>
            <person name="Dunkov B.C."/>
            <person name="Dunn P."/>
            <person name="Durbin K.J."/>
            <person name="Evangelista C.C."/>
            <person name="Ferraz C."/>
            <person name="Ferriera S."/>
            <person name="Fleischmann W."/>
            <person name="Fosler C."/>
            <person name="Gabrielian A.E."/>
            <person name="Garg N.S."/>
            <person name="Gelbart W.M."/>
            <person name="Glasser K."/>
            <person name="Glodek A."/>
            <person name="Gong F."/>
            <person name="Gorrell J.H."/>
            <person name="Gu Z."/>
            <person name="Guan P."/>
            <person name="Harris M."/>
            <person name="Harris N.L."/>
            <person name="Harvey D.A."/>
            <person name="Heiman T.J."/>
            <person name="Hernandez J.R."/>
            <person name="Houck J."/>
            <person name="Hostin D."/>
            <person name="Houston K.A."/>
            <person name="Howland T.J."/>
            <person name="Wei M.-H."/>
            <person name="Ibegwam C."/>
            <person name="Jalali M."/>
            <person name="Kalush F."/>
            <person name="Karpen G.H."/>
            <person name="Ke Z."/>
            <person name="Kennison J.A."/>
            <person name="Ketchum K.A."/>
            <person name="Kimmel B.E."/>
            <person name="Kodira C.D."/>
            <person name="Kraft C.L."/>
            <person name="Kravitz S."/>
            <person name="Kulp D."/>
            <person name="Lai Z."/>
            <person name="Lasko P."/>
            <person name="Lei Y."/>
            <person name="Levitsky A.A."/>
            <person name="Li J.H."/>
            <person name="Li Z."/>
            <person name="Liang Y."/>
            <person name="Lin X."/>
            <person name="Liu X."/>
            <person name="Mattei B."/>
            <person name="McIntosh T.C."/>
            <person name="McLeod M.P."/>
            <person name="McPherson D."/>
            <person name="Merkulov G."/>
            <person name="Milshina N.V."/>
            <person name="Mobarry C."/>
            <person name="Morris J."/>
            <person name="Moshrefi A."/>
            <person name="Mount S.M."/>
            <person name="Moy M."/>
            <person name="Murphy B."/>
            <person name="Murphy L."/>
            <person name="Muzny D.M."/>
            <person name="Nelson D.L."/>
            <person name="Nelson D.R."/>
            <person name="Nelson K.A."/>
            <person name="Nixon K."/>
            <person name="Nusskern D.R."/>
            <person name="Pacleb J.M."/>
            <person name="Palazzolo M."/>
            <person name="Pittman G.S."/>
            <person name="Pan S."/>
            <person name="Pollard J."/>
            <person name="Puri V."/>
            <person name="Reese M.G."/>
            <person name="Reinert K."/>
            <person name="Remington K."/>
            <person name="Saunders R.D.C."/>
            <person name="Scheeler F."/>
            <person name="Shen H."/>
            <person name="Shue B.C."/>
            <person name="Siden-Kiamos I."/>
            <person name="Simpson M."/>
            <person name="Skupski M.P."/>
            <person name="Smith T.J."/>
            <person name="Spier E."/>
            <person name="Spradling A.C."/>
            <person name="Stapleton M."/>
            <person name="Strong R."/>
            <person name="Sun E."/>
            <person name="Svirskas R."/>
            <person name="Tector C."/>
            <person name="Turner R."/>
            <person name="Venter E."/>
            <person name="Wang A.H."/>
            <person name="Wang X."/>
            <person name="Wang Z.-Y."/>
            <person name="Wassarman D.A."/>
            <person name="Weinstock G.M."/>
            <person name="Weissenbach J."/>
            <person name="Williams S.M."/>
            <person name="Woodage T."/>
            <person name="Worley K.C."/>
            <person name="Wu D."/>
            <person name="Yang S."/>
            <person name="Yao Q.A."/>
            <person name="Ye J."/>
            <person name="Yeh R.-F."/>
            <person name="Zaveri J.S."/>
            <person name="Zhan M."/>
            <person name="Zhang G."/>
            <person name="Zhao Q."/>
            <person name="Zheng L."/>
            <person name="Zheng X.H."/>
            <person name="Zhong F.N."/>
            <person name="Zhong W."/>
            <person name="Zhou X."/>
            <person name="Zhu S.C."/>
            <person name="Zhu X."/>
            <person name="Smith H.O."/>
            <person name="Gibbs R.A."/>
            <person name="Myers E.W."/>
            <person name="Rubin G.M."/>
            <person name="Venter J.C."/>
        </authorList>
    </citation>
    <scope>NUCLEOTIDE SEQUENCE [LARGE SCALE GENOMIC DNA]</scope>
    <source>
        <strain evidence="10">Berkeley</strain>
    </source>
</reference>
<reference evidence="10" key="2">
    <citation type="journal article" date="2002" name="Genome Biol.">
        <title>Annotation of the Drosophila melanogaster euchromatic genome: a systematic review.</title>
        <authorList>
            <person name="Misra S."/>
            <person name="Crosby M.A."/>
            <person name="Mungall C.J."/>
            <person name="Matthews B.B."/>
            <person name="Campbell K.S."/>
            <person name="Hradecky P."/>
            <person name="Huang Y."/>
            <person name="Kaminker J.S."/>
            <person name="Millburn G.H."/>
            <person name="Prochnik S.E."/>
            <person name="Smith C.D."/>
            <person name="Tupy J.L."/>
            <person name="Whitfield E.J."/>
            <person name="Bayraktaroglu L."/>
            <person name="Berman B.P."/>
            <person name="Bettencourt B.R."/>
            <person name="Celniker S.E."/>
            <person name="de Grey A.D.N.J."/>
            <person name="Drysdale R.A."/>
            <person name="Harris N.L."/>
            <person name="Richter J."/>
            <person name="Russo S."/>
            <person name="Schroeder A.J."/>
            <person name="Shu S.Q."/>
            <person name="Stapleton M."/>
            <person name="Yamada C."/>
            <person name="Ashburner M."/>
            <person name="Gelbart W.M."/>
            <person name="Rubin G.M."/>
            <person name="Lewis S.E."/>
        </authorList>
    </citation>
    <scope>GENOME REANNOTATION</scope>
    <source>
        <strain evidence="10">Berkeley</strain>
    </source>
</reference>
<reference evidence="6" key="3">
    <citation type="journal article" date="2002" name="Genome Biol.">
        <title>A Drosophila full-length cDNA resource.</title>
        <authorList>
            <person name="Stapleton M."/>
            <person name="Carlson J.W."/>
            <person name="Brokstein P."/>
            <person name="Yu C."/>
            <person name="Champe M."/>
            <person name="George R.A."/>
            <person name="Guarin H."/>
            <person name="Kronmiller B."/>
            <person name="Pacleb J.M."/>
            <person name="Park S."/>
            <person name="Wan K.H."/>
            <person name="Rubin G.M."/>
            <person name="Celniker S.E."/>
        </authorList>
    </citation>
    <scope>NUCLEOTIDE SEQUENCE [LARGE SCALE MRNA]</scope>
    <source>
        <strain evidence="6">Berkeley</strain>
        <tissue evidence="6">Embryo</tissue>
    </source>
</reference>
<reference evidence="7 8" key="4">
    <citation type="submission" date="2016-07" db="EMBL/GenBank/DDBJ databases">
        <authorList>
            <person name="Booth B."/>
            <person name="Calderwood M."/>
            <person name="Carlson J."/>
            <person name="Celniker S."/>
            <person name="Chavez C."/>
            <person name="Frise E."/>
            <person name="George R."/>
            <person name="Hao T."/>
            <person name="Hu Y."/>
            <person name="Hill D."/>
            <person name="Mohr S."/>
            <person name="Pacleb J."/>
            <person name="Park S."/>
            <person name="Perrimon N."/>
            <person name="Rubin G.M."/>
            <person name="Stapleton M."/>
            <person name="Spirohn K."/>
            <person name="Vidal M."/>
            <person name="Wan K."/>
            <person name="Yu C."/>
        </authorList>
    </citation>
    <scope>NUCLEOTIDE SEQUENCE [LARGE SCALE MRNA]</scope>
</reference>
<reference evidence="5" key="5">
    <citation type="journal article" date="2014" name="Curr. Biol.">
        <title>GMF promotes leading-edge dynamics and collective cell migration in vivo.</title>
        <authorList>
            <person name="Poukkula M."/>
            <person name="Hakala M."/>
            <person name="Pentinmikko N."/>
            <person name="Sweeney M.O."/>
            <person name="Jansen S."/>
            <person name="Mattila J."/>
            <person name="Hietakangas V."/>
            <person name="Goode B.L."/>
            <person name="Lappalainen P."/>
        </authorList>
    </citation>
    <scope>FUNCTION</scope>
    <scope>SUBCELLULAR LOCATION</scope>
    <scope>TISSUE SPECIFICITY</scope>
    <scope>DISRUPTION PHENOTYPE</scope>
</reference>
<evidence type="ECO:0000255" key="1">
    <source>
        <dbReference type="PIRNR" id="PIRNR001788"/>
    </source>
</evidence>
<evidence type="ECO:0000255" key="2">
    <source>
        <dbReference type="PROSITE-ProRule" id="PRU00599"/>
    </source>
</evidence>
<evidence type="ECO:0000269" key="3">
    <source>
    </source>
</evidence>
<evidence type="ECO:0000303" key="4">
    <source>
    </source>
</evidence>
<evidence type="ECO:0000305" key="5"/>
<evidence type="ECO:0000312" key="6">
    <source>
        <dbReference type="EMBL" id="AAM50011.1"/>
    </source>
</evidence>
<evidence type="ECO:0000312" key="7">
    <source>
        <dbReference type="EMBL" id="AAT27269.1"/>
    </source>
</evidence>
<evidence type="ECO:0000312" key="8">
    <source>
        <dbReference type="EMBL" id="ANY27663.1"/>
    </source>
</evidence>
<evidence type="ECO:0000312" key="9">
    <source>
        <dbReference type="FlyBase" id="FBgn0028894"/>
    </source>
</evidence>
<evidence type="ECO:0000312" key="10">
    <source>
        <dbReference type="Proteomes" id="UP000000803"/>
    </source>
</evidence>
<comment type="function">
    <text evidence="3">Inhibits Arp2/3-mediated actin nucleation (PubMed:25308079). Together with flr, promotes Arp2/3-nucleated actin filament array disassembly (PubMed:25308079). Promotes debranching (PubMed:25308079). Regulates lamellipodial protrusion dynamics possibly by facilitating lamellipodial retraction (PubMed:25308079). In egg chambers, enhances the retraction dynamics of cellular extensions in border cells and thus together with flr plays an important role in directional migration of border cell clusters (PubMed:25308079).</text>
</comment>
<comment type="subcellular location">
    <subcellularLocation>
        <location evidence="3">Cell projection</location>
        <location evidence="3">Lamellipodium</location>
    </subcellularLocation>
    <subcellularLocation>
        <location evidence="3">Cytoplasm</location>
        <location evidence="3">Perinuclear region</location>
    </subcellularLocation>
    <subcellularLocation>
        <location evidence="3">Nucleus</location>
    </subcellularLocation>
    <subcellularLocation>
        <location evidence="3">Cytoplasm</location>
        <location evidence="3">Cell cortex</location>
    </subcellularLocation>
    <text evidence="3">Colocalizes with F-actin and Arp2/3-nucleated actin arrays.</text>
</comment>
<comment type="tissue specificity">
    <text evidence="3">In ovaries, expressed in follicular epithelium, in polar cells, migrating border cells, and centripedal cells (at protein level).</text>
</comment>
<comment type="disruption phenotype">
    <text evidence="3">RNAi-mediated knockdown results in not severe delays of border cell migrations in stage 10 egg chambers (PubMed:25308079). Simultaneous RNAi-mediated knockdown of GMF and flr results in an accumulation of F-actin in follicular epithelium of developing egg chambers, border cell migration delays, and in deformation of bristles in the thorax (PubMed:25308079). Simultaneous RNAi-mediated knockdown in border cells of GMF and flr enhances the accumulation of F-actin foci (PubMed:25308079).</text>
</comment>
<comment type="similarity">
    <text evidence="1">Belongs to the actin-binding proteins ADF family. GMF subfamily.</text>
</comment>
<comment type="sequence caution" evidence="5">
    <conflict type="erroneous initiation">
        <sequence resource="EMBL-CDS" id="AAM50011"/>
    </conflict>
    <text>Truncated N-terminus.</text>
</comment>
<dbReference type="EMBL" id="AE014134">
    <property type="protein sequence ID" value="AAF53517.2"/>
    <property type="molecule type" value="Genomic_DNA"/>
</dbReference>
<dbReference type="EMBL" id="AY118642">
    <property type="protein sequence ID" value="AAM50011.1"/>
    <property type="status" value="ALT_INIT"/>
    <property type="molecule type" value="mRNA"/>
</dbReference>
<dbReference type="EMBL" id="BT014645">
    <property type="protein sequence ID" value="AAT27269.1"/>
    <property type="molecule type" value="mRNA"/>
</dbReference>
<dbReference type="EMBL" id="KX531853">
    <property type="protein sequence ID" value="ANY27663.1"/>
    <property type="molecule type" value="mRNA"/>
</dbReference>
<dbReference type="RefSeq" id="NP_609787.2">
    <property type="nucleotide sequence ID" value="NM_135943.3"/>
</dbReference>
<dbReference type="SMR" id="Q9VJL6"/>
<dbReference type="FunCoup" id="Q9VJL6">
    <property type="interactions" value="399"/>
</dbReference>
<dbReference type="IntAct" id="Q9VJL6">
    <property type="interactions" value="2"/>
</dbReference>
<dbReference type="STRING" id="7227.FBpp0080408"/>
<dbReference type="PaxDb" id="7227-FBpp0080408"/>
<dbReference type="DNASU" id="34963"/>
<dbReference type="EnsemblMetazoa" id="FBtr0080851">
    <property type="protein sequence ID" value="FBpp0080408"/>
    <property type="gene ID" value="FBgn0028894"/>
</dbReference>
<dbReference type="GeneID" id="34963"/>
<dbReference type="KEGG" id="dme:Dmel_CG5869"/>
<dbReference type="UCSC" id="CG5869-RA">
    <property type="organism name" value="d. melanogaster"/>
</dbReference>
<dbReference type="AGR" id="FB:FBgn0028894"/>
<dbReference type="CTD" id="34963"/>
<dbReference type="FlyBase" id="FBgn0028894">
    <property type="gene designation" value="GMF"/>
</dbReference>
<dbReference type="VEuPathDB" id="VectorBase:FBgn0028894"/>
<dbReference type="eggNOG" id="KOG1736">
    <property type="taxonomic scope" value="Eukaryota"/>
</dbReference>
<dbReference type="GeneTree" id="ENSGT00390000008920"/>
<dbReference type="HOGENOM" id="CLU_087056_1_0_1"/>
<dbReference type="InParanoid" id="Q9VJL6"/>
<dbReference type="OMA" id="EWKMLYA"/>
<dbReference type="OrthoDB" id="3919494at2759"/>
<dbReference type="Reactome" id="R-DME-6798695">
    <property type="pathway name" value="Neutrophil degranulation"/>
</dbReference>
<dbReference type="BioGRID-ORCS" id="34963">
    <property type="hits" value="0 hits in 3 CRISPR screens"/>
</dbReference>
<dbReference type="GenomeRNAi" id="34963"/>
<dbReference type="PRO" id="PR:Q9VJL6"/>
<dbReference type="Proteomes" id="UP000000803">
    <property type="component" value="Chromosome 2L"/>
</dbReference>
<dbReference type="Bgee" id="FBgn0028894">
    <property type="expression patterns" value="Expressed in T neuron T5d (Drosophila) in embryonic/larval optic lobe (Drosophila) and 114 other cell types or tissues"/>
</dbReference>
<dbReference type="ExpressionAtlas" id="Q9VJL6">
    <property type="expression patterns" value="baseline and differential"/>
</dbReference>
<dbReference type="GO" id="GO:0071944">
    <property type="term" value="C:cell periphery"/>
    <property type="evidence" value="ECO:0000314"/>
    <property type="project" value="FlyBase"/>
</dbReference>
<dbReference type="GO" id="GO:0030864">
    <property type="term" value="C:cortical actin cytoskeleton"/>
    <property type="evidence" value="ECO:0000318"/>
    <property type="project" value="GO_Central"/>
</dbReference>
<dbReference type="GO" id="GO:0030027">
    <property type="term" value="C:lamellipodium"/>
    <property type="evidence" value="ECO:0000314"/>
    <property type="project" value="FlyBase"/>
</dbReference>
<dbReference type="GO" id="GO:0005634">
    <property type="term" value="C:nucleus"/>
    <property type="evidence" value="ECO:0000314"/>
    <property type="project" value="FlyBase"/>
</dbReference>
<dbReference type="GO" id="GO:0048471">
    <property type="term" value="C:perinuclear region of cytoplasm"/>
    <property type="evidence" value="ECO:0000314"/>
    <property type="project" value="FlyBase"/>
</dbReference>
<dbReference type="GO" id="GO:0003779">
    <property type="term" value="F:actin binding"/>
    <property type="evidence" value="ECO:0007669"/>
    <property type="project" value="UniProtKB-KW"/>
</dbReference>
<dbReference type="GO" id="GO:0071933">
    <property type="term" value="F:Arp2/3 complex binding"/>
    <property type="evidence" value="ECO:0000318"/>
    <property type="project" value="GO_Central"/>
</dbReference>
<dbReference type="GO" id="GO:0071846">
    <property type="term" value="P:actin filament debranching"/>
    <property type="evidence" value="ECO:0000314"/>
    <property type="project" value="FlyBase"/>
</dbReference>
<dbReference type="GO" id="GO:0007298">
    <property type="term" value="P:border follicle cell migration"/>
    <property type="evidence" value="ECO:0000315"/>
    <property type="project" value="FlyBase"/>
</dbReference>
<dbReference type="GO" id="GO:0034316">
    <property type="term" value="P:negative regulation of Arp2/3 complex-mediated actin nucleation"/>
    <property type="evidence" value="ECO:0000314"/>
    <property type="project" value="FlyBase"/>
</dbReference>
<dbReference type="GO" id="GO:0030833">
    <property type="term" value="P:regulation of actin filament polymerization"/>
    <property type="evidence" value="ECO:0000315"/>
    <property type="project" value="FlyBase"/>
</dbReference>
<dbReference type="GO" id="GO:0031344">
    <property type="term" value="P:regulation of cell projection organization"/>
    <property type="evidence" value="ECO:0000315"/>
    <property type="project" value="FlyBase"/>
</dbReference>
<dbReference type="CDD" id="cd11283">
    <property type="entry name" value="ADF_GMF-beta_like"/>
    <property type="match status" value="1"/>
</dbReference>
<dbReference type="FunFam" id="3.40.20.10:FF:000026">
    <property type="entry name" value="Glia maturation factor"/>
    <property type="match status" value="1"/>
</dbReference>
<dbReference type="Gene3D" id="3.40.20.10">
    <property type="entry name" value="Severin"/>
    <property type="match status" value="1"/>
</dbReference>
<dbReference type="InterPro" id="IPR002108">
    <property type="entry name" value="ADF-H"/>
</dbReference>
<dbReference type="InterPro" id="IPR029006">
    <property type="entry name" value="ADF-H/Gelsolin-like_dom_sf"/>
</dbReference>
<dbReference type="InterPro" id="IPR011171">
    <property type="entry name" value="GMF"/>
</dbReference>
<dbReference type="PANTHER" id="PTHR11249:SF2">
    <property type="entry name" value="GLIA MATURATION FACTOR"/>
    <property type="match status" value="1"/>
</dbReference>
<dbReference type="PANTHER" id="PTHR11249">
    <property type="entry name" value="GLIAL FACTOR NATURATION FACTOR"/>
    <property type="match status" value="1"/>
</dbReference>
<dbReference type="Pfam" id="PF00241">
    <property type="entry name" value="Cofilin_ADF"/>
    <property type="match status" value="1"/>
</dbReference>
<dbReference type="PIRSF" id="PIRSF001788">
    <property type="entry name" value="GMF-beta"/>
    <property type="match status" value="1"/>
</dbReference>
<dbReference type="SMART" id="SM00102">
    <property type="entry name" value="ADF"/>
    <property type="match status" value="1"/>
</dbReference>
<dbReference type="SUPFAM" id="SSF55753">
    <property type="entry name" value="Actin depolymerizing proteins"/>
    <property type="match status" value="1"/>
</dbReference>
<dbReference type="PROSITE" id="PS51263">
    <property type="entry name" value="ADF_H"/>
    <property type="match status" value="1"/>
</dbReference>
<gene>
    <name evidence="9" type="primary">GMF</name>
    <name evidence="9" type="ORF">CG5869</name>
</gene>
<proteinExistence type="evidence at protein level"/>
<organism evidence="10">
    <name type="scientific">Drosophila melanogaster</name>
    <name type="common">Fruit fly</name>
    <dbReference type="NCBI Taxonomy" id="7227"/>
    <lineage>
        <taxon>Eukaryota</taxon>
        <taxon>Metazoa</taxon>
        <taxon>Ecdysozoa</taxon>
        <taxon>Arthropoda</taxon>
        <taxon>Hexapoda</taxon>
        <taxon>Insecta</taxon>
        <taxon>Pterygota</taxon>
        <taxon>Neoptera</taxon>
        <taxon>Endopterygota</taxon>
        <taxon>Diptera</taxon>
        <taxon>Brachycera</taxon>
        <taxon>Muscomorpha</taxon>
        <taxon>Ephydroidea</taxon>
        <taxon>Drosophilidae</taxon>
        <taxon>Drosophila</taxon>
        <taxon>Sophophora</taxon>
    </lineage>
</organism>
<name>GMF_DROME</name>
<protein>
    <recommendedName>
        <fullName evidence="4 9">Glia maturation factor</fullName>
    </recommendedName>
</protein>
<accession>Q9VJL6</accession>
<accession>Q8MSR7</accession>
<accession>Q9NK59</accession>